<evidence type="ECO:0000255" key="1">
    <source>
        <dbReference type="HAMAP-Rule" id="MF_01039"/>
    </source>
</evidence>
<gene>
    <name evidence="1" type="primary">gpmA</name>
    <name type="ordered locus">LMHCC_0337</name>
</gene>
<dbReference type="EC" id="5.4.2.11" evidence="1"/>
<dbReference type="EMBL" id="CP001175">
    <property type="protein sequence ID" value="ACK38697.1"/>
    <property type="molecule type" value="Genomic_DNA"/>
</dbReference>
<dbReference type="RefSeq" id="WP_003723823.1">
    <property type="nucleotide sequence ID" value="NC_011660.1"/>
</dbReference>
<dbReference type="SMR" id="B8DFA5"/>
<dbReference type="KEGG" id="lmh:LMHCC_0337"/>
<dbReference type="HOGENOM" id="CLU_033323_1_1_9"/>
<dbReference type="UniPathway" id="UPA00109">
    <property type="reaction ID" value="UER00186"/>
</dbReference>
<dbReference type="GO" id="GO:0004619">
    <property type="term" value="F:phosphoglycerate mutase activity"/>
    <property type="evidence" value="ECO:0007669"/>
    <property type="project" value="UniProtKB-EC"/>
</dbReference>
<dbReference type="GO" id="GO:0006094">
    <property type="term" value="P:gluconeogenesis"/>
    <property type="evidence" value="ECO:0007669"/>
    <property type="project" value="UniProtKB-UniRule"/>
</dbReference>
<dbReference type="GO" id="GO:0006096">
    <property type="term" value="P:glycolytic process"/>
    <property type="evidence" value="ECO:0007669"/>
    <property type="project" value="UniProtKB-UniRule"/>
</dbReference>
<dbReference type="CDD" id="cd07067">
    <property type="entry name" value="HP_PGM_like"/>
    <property type="match status" value="1"/>
</dbReference>
<dbReference type="FunFam" id="3.40.50.1240:FF:000003">
    <property type="entry name" value="2,3-bisphosphoglycerate-dependent phosphoglycerate mutase"/>
    <property type="match status" value="1"/>
</dbReference>
<dbReference type="Gene3D" id="3.40.50.1240">
    <property type="entry name" value="Phosphoglycerate mutase-like"/>
    <property type="match status" value="1"/>
</dbReference>
<dbReference type="HAMAP" id="MF_01039">
    <property type="entry name" value="PGAM_GpmA"/>
    <property type="match status" value="1"/>
</dbReference>
<dbReference type="InterPro" id="IPR013078">
    <property type="entry name" value="His_Pase_superF_clade-1"/>
</dbReference>
<dbReference type="InterPro" id="IPR029033">
    <property type="entry name" value="His_PPase_superfam"/>
</dbReference>
<dbReference type="InterPro" id="IPR001345">
    <property type="entry name" value="PG/BPGM_mutase_AS"/>
</dbReference>
<dbReference type="InterPro" id="IPR005952">
    <property type="entry name" value="Phosphogly_mut1"/>
</dbReference>
<dbReference type="NCBIfam" id="TIGR01258">
    <property type="entry name" value="pgm_1"/>
    <property type="match status" value="1"/>
</dbReference>
<dbReference type="NCBIfam" id="NF010713">
    <property type="entry name" value="PRK14115.1"/>
    <property type="match status" value="1"/>
</dbReference>
<dbReference type="PANTHER" id="PTHR11931">
    <property type="entry name" value="PHOSPHOGLYCERATE MUTASE"/>
    <property type="match status" value="1"/>
</dbReference>
<dbReference type="Pfam" id="PF00300">
    <property type="entry name" value="His_Phos_1"/>
    <property type="match status" value="2"/>
</dbReference>
<dbReference type="PIRSF" id="PIRSF000709">
    <property type="entry name" value="6PFK_2-Ptase"/>
    <property type="match status" value="1"/>
</dbReference>
<dbReference type="SMART" id="SM00855">
    <property type="entry name" value="PGAM"/>
    <property type="match status" value="1"/>
</dbReference>
<dbReference type="SUPFAM" id="SSF53254">
    <property type="entry name" value="Phosphoglycerate mutase-like"/>
    <property type="match status" value="1"/>
</dbReference>
<dbReference type="PROSITE" id="PS00175">
    <property type="entry name" value="PG_MUTASE"/>
    <property type="match status" value="1"/>
</dbReference>
<sequence>MKLVLIRHGQSEWNKLNLFTGWHDVDLSQEGVVEAMTAGKRIKEAGLEFDVAFTSVLTRAIKTLNYVLEESDQMWVPVHKSWRLNERHYGALQGLNKQETAEKYGADQVQKWRRSYDTLPPLLEENDERQAKNDRRYQLLDTHAIPSGENLKVTLERVIPYWMDTIAPEIKEGRRVVIAAHGNSLRALVKFLEGISDDEIMDLEIPTGVPLVYELNDDLKPVNKYYLDK</sequence>
<feature type="chain" id="PRO_1000149515" description="2,3-bisphosphoglycerate-dependent phosphoglycerate mutase">
    <location>
        <begin position="1"/>
        <end position="229"/>
    </location>
</feature>
<feature type="active site" description="Tele-phosphohistidine intermediate" evidence="1">
    <location>
        <position position="8"/>
    </location>
</feature>
<feature type="active site" description="Proton donor/acceptor" evidence="1">
    <location>
        <position position="86"/>
    </location>
</feature>
<feature type="binding site" evidence="1">
    <location>
        <begin position="7"/>
        <end position="14"/>
    </location>
    <ligand>
        <name>substrate</name>
    </ligand>
</feature>
<feature type="binding site" evidence="1">
    <location>
        <begin position="20"/>
        <end position="21"/>
    </location>
    <ligand>
        <name>substrate</name>
    </ligand>
</feature>
<feature type="binding site" evidence="1">
    <location>
        <position position="59"/>
    </location>
    <ligand>
        <name>substrate</name>
    </ligand>
</feature>
<feature type="binding site" evidence="1">
    <location>
        <begin position="86"/>
        <end position="89"/>
    </location>
    <ligand>
        <name>substrate</name>
    </ligand>
</feature>
<feature type="binding site" evidence="1">
    <location>
        <position position="97"/>
    </location>
    <ligand>
        <name>substrate</name>
    </ligand>
</feature>
<feature type="binding site" evidence="1">
    <location>
        <begin position="113"/>
        <end position="114"/>
    </location>
    <ligand>
        <name>substrate</name>
    </ligand>
</feature>
<feature type="binding site" evidence="1">
    <location>
        <begin position="182"/>
        <end position="183"/>
    </location>
    <ligand>
        <name>substrate</name>
    </ligand>
</feature>
<feature type="site" description="Transition state stabilizer" evidence="1">
    <location>
        <position position="181"/>
    </location>
</feature>
<proteinExistence type="inferred from homology"/>
<protein>
    <recommendedName>
        <fullName evidence="1">2,3-bisphosphoglycerate-dependent phosphoglycerate mutase</fullName>
        <shortName evidence="1">BPG-dependent PGAM</shortName>
        <shortName evidence="1">PGAM</shortName>
        <shortName evidence="1">Phosphoglyceromutase</shortName>
        <shortName evidence="1">dPGM</shortName>
        <ecNumber evidence="1">5.4.2.11</ecNumber>
    </recommendedName>
</protein>
<keyword id="KW-0312">Gluconeogenesis</keyword>
<keyword id="KW-0324">Glycolysis</keyword>
<keyword id="KW-0413">Isomerase</keyword>
<accession>B8DFA5</accession>
<organism>
    <name type="scientific">Listeria monocytogenes serotype 4a (strain HCC23)</name>
    <dbReference type="NCBI Taxonomy" id="552536"/>
    <lineage>
        <taxon>Bacteria</taxon>
        <taxon>Bacillati</taxon>
        <taxon>Bacillota</taxon>
        <taxon>Bacilli</taxon>
        <taxon>Bacillales</taxon>
        <taxon>Listeriaceae</taxon>
        <taxon>Listeria</taxon>
    </lineage>
</organism>
<comment type="function">
    <text evidence="1">Catalyzes the interconversion of 2-phosphoglycerate and 3-phosphoglycerate.</text>
</comment>
<comment type="catalytic activity">
    <reaction evidence="1">
        <text>(2R)-2-phosphoglycerate = (2R)-3-phosphoglycerate</text>
        <dbReference type="Rhea" id="RHEA:15901"/>
        <dbReference type="ChEBI" id="CHEBI:58272"/>
        <dbReference type="ChEBI" id="CHEBI:58289"/>
        <dbReference type="EC" id="5.4.2.11"/>
    </reaction>
</comment>
<comment type="pathway">
    <text evidence="1">Carbohydrate degradation; glycolysis; pyruvate from D-glyceraldehyde 3-phosphate: step 3/5.</text>
</comment>
<comment type="similarity">
    <text evidence="1">Belongs to the phosphoglycerate mutase family. BPG-dependent PGAM subfamily.</text>
</comment>
<name>GPMA_LISMH</name>
<reference key="1">
    <citation type="journal article" date="2011" name="J. Bacteriol.">
        <title>Genome sequence of lineage III Listeria monocytogenes strain HCC23.</title>
        <authorList>
            <person name="Steele C.L."/>
            <person name="Donaldson J.R."/>
            <person name="Paul D."/>
            <person name="Banes M.M."/>
            <person name="Arick T."/>
            <person name="Bridges S.M."/>
            <person name="Lawrence M.L."/>
        </authorList>
    </citation>
    <scope>NUCLEOTIDE SEQUENCE [LARGE SCALE GENOMIC DNA]</scope>
    <source>
        <strain>HCC23</strain>
    </source>
</reference>